<comment type="function">
    <text evidence="1">NAD-binding protein involved in the addition of a carboxymethylaminomethyl (cmnm) group at the wobble position (U34) of certain tRNAs, forming tRNA-cmnm(5)s(2)U34.</text>
</comment>
<comment type="cofactor">
    <cofactor evidence="1">
        <name>FAD</name>
        <dbReference type="ChEBI" id="CHEBI:57692"/>
    </cofactor>
</comment>
<comment type="subunit">
    <text evidence="1">Homodimer. Heterotetramer of two MnmE and two MnmG subunits.</text>
</comment>
<comment type="subcellular location">
    <subcellularLocation>
        <location evidence="1">Cytoplasm</location>
    </subcellularLocation>
</comment>
<comment type="similarity">
    <text evidence="1">Belongs to the MnmG family.</text>
</comment>
<organism>
    <name type="scientific">Coxiella burnetii (strain RSA 493 / Nine Mile phase I)</name>
    <dbReference type="NCBI Taxonomy" id="227377"/>
    <lineage>
        <taxon>Bacteria</taxon>
        <taxon>Pseudomonadati</taxon>
        <taxon>Pseudomonadota</taxon>
        <taxon>Gammaproteobacteria</taxon>
        <taxon>Legionellales</taxon>
        <taxon>Coxiellaceae</taxon>
        <taxon>Coxiella</taxon>
    </lineage>
</organism>
<evidence type="ECO:0000255" key="1">
    <source>
        <dbReference type="HAMAP-Rule" id="MF_00129"/>
    </source>
</evidence>
<evidence type="ECO:0000305" key="2"/>
<feature type="chain" id="PRO_0000117091" description="tRNA uridine 5-carboxymethylaminomethyl modification enzyme MnmG">
    <location>
        <begin position="1"/>
        <end position="627"/>
    </location>
</feature>
<feature type="binding site" evidence="1">
    <location>
        <begin position="14"/>
        <end position="19"/>
    </location>
    <ligand>
        <name>FAD</name>
        <dbReference type="ChEBI" id="CHEBI:57692"/>
    </ligand>
</feature>
<feature type="binding site" evidence="1">
    <location>
        <begin position="274"/>
        <end position="288"/>
    </location>
    <ligand>
        <name>NAD(+)</name>
        <dbReference type="ChEBI" id="CHEBI:57540"/>
    </ligand>
</feature>
<feature type="sequence conflict" description="In Ref. 1; CAA71459." evidence="2" ref="1">
    <original>V</original>
    <variation>A</variation>
    <location>
        <position position="12"/>
    </location>
</feature>
<feature type="sequence conflict" description="In Ref. 1; CAA71459." evidence="2" ref="1">
    <original>S</original>
    <variation>Y</variation>
    <location>
        <position position="214"/>
    </location>
</feature>
<feature type="sequence conflict" description="In Ref. 1; CAA71459." evidence="2" ref="1">
    <original>R</original>
    <variation>H</variation>
    <location>
        <position position="237"/>
    </location>
</feature>
<feature type="sequence conflict" description="In Ref. 1; CAA71459." evidence="2" ref="1">
    <original>Q</original>
    <variation>R</variation>
    <location>
        <position position="295"/>
    </location>
</feature>
<feature type="sequence conflict" description="In Ref. 1; CAA71459." evidence="2" ref="1">
    <original>L</original>
    <variation>I</variation>
    <location>
        <position position="303"/>
    </location>
</feature>
<feature type="sequence conflict" description="In Ref. 1; CAA71459." evidence="2" ref="1">
    <original>V</original>
    <variation>L</variation>
    <location>
        <position position="313"/>
    </location>
</feature>
<feature type="sequence conflict" description="In Ref. 1; CAA71459." evidence="2" ref="1">
    <original>F</original>
    <variation>V</variation>
    <location>
        <position position="325"/>
    </location>
</feature>
<feature type="sequence conflict" description="In Ref. 1; CAA71459." evidence="2" ref="1">
    <original>IK</original>
    <variation>KT</variation>
    <location>
        <begin position="329"/>
        <end position="330"/>
    </location>
</feature>
<feature type="sequence conflict" description="In Ref. 1; CAA71459." evidence="2" ref="1">
    <original>E</original>
    <variation>A</variation>
    <location>
        <position position="333"/>
    </location>
</feature>
<feature type="sequence conflict" description="In Ref. 1; CAA71459." evidence="2" ref="1">
    <original>A</original>
    <variation>T</variation>
    <location>
        <position position="343"/>
    </location>
</feature>
<keyword id="KW-0963">Cytoplasm</keyword>
<keyword id="KW-0274">FAD</keyword>
<keyword id="KW-0285">Flavoprotein</keyword>
<keyword id="KW-0520">NAD</keyword>
<keyword id="KW-1185">Reference proteome</keyword>
<keyword id="KW-0819">tRNA processing</keyword>
<gene>
    <name evidence="1" type="primary">mnmG</name>
    <name evidence="1" type="synonym">gidA</name>
    <name type="ordered locus">CBU_1924</name>
</gene>
<sequence>MQSTSQQFDVIVVGGGHAGTEAALVAARMGARTLLLTHNIETLGQMSCNPAIGGIGKSHLVKEIDALGGIMALAADQAGIHFRTLNARKGPAVRATRAQADRVLYKAAIHHALENQPHLWLFQQGVDDLIIQNNRAAGVVTQMGLAFYAPTVILTVGTFLGGKIHIGMNHYRGGRAGDPPALALAERLREMPFRVERLKTGTPPRIDGRTINYSQLIEQPSDQPLPLMSYWSHGEDRPRQVSCFITQTNEKTHDIIRNGLKTSPLFSGVIEGVGPRYCPSIEDKIVRFADRNSHQLFLEPEGLNTPEVYPNGVSTSLSFDVQLDFIHSIKGLEKCHITRPGYAIEYDYFDPRDLKPSLETKYVPGLYFAGQINGTTGYEEAAAQGLIAGINAALQIQERAPWTPARDEAYIGVLIDDLTTRGTNEPYRMFTSRAEYRLLLRQDNADLRLTEKGRDLGCVDDERWNFFVKKKETIEKEQQRLKKQRIWPKSTVAKAIESRFQQLLERDYSAMDLLRRPEINYPALMQIEELGPAVLEPSVAEQIDIQAKYEGYLTHQLAEIARQKKYQTAQIPSSLDYNQVTGLSNEVRQKLNETKPTTLGQASRIPGITPAAISLLLVHLKKKELYP</sequence>
<dbReference type="EMBL" id="Y10436">
    <property type="protein sequence ID" value="CAA71459.1"/>
    <property type="molecule type" value="Genomic_DNA"/>
</dbReference>
<dbReference type="EMBL" id="AE016828">
    <property type="protein sequence ID" value="AAO91415.2"/>
    <property type="molecule type" value="Genomic_DNA"/>
</dbReference>
<dbReference type="RefSeq" id="NP_820901.2">
    <property type="nucleotide sequence ID" value="NC_002971.3"/>
</dbReference>
<dbReference type="RefSeq" id="WP_010958541.1">
    <property type="nucleotide sequence ID" value="NZ_CCYB01000002.1"/>
</dbReference>
<dbReference type="SMR" id="P94613"/>
<dbReference type="STRING" id="227377.CBU_1924"/>
<dbReference type="DNASU" id="1209837"/>
<dbReference type="EnsemblBacteria" id="AAO91415">
    <property type="protein sequence ID" value="AAO91415"/>
    <property type="gene ID" value="CBU_1924"/>
</dbReference>
<dbReference type="GeneID" id="1209837"/>
<dbReference type="KEGG" id="cbu:CBU_1924"/>
<dbReference type="PATRIC" id="fig|227377.7.peg.1906"/>
<dbReference type="eggNOG" id="COG0445">
    <property type="taxonomic scope" value="Bacteria"/>
</dbReference>
<dbReference type="HOGENOM" id="CLU_007831_2_2_6"/>
<dbReference type="OrthoDB" id="9815560at2"/>
<dbReference type="Proteomes" id="UP000002671">
    <property type="component" value="Chromosome"/>
</dbReference>
<dbReference type="GO" id="GO:0005829">
    <property type="term" value="C:cytosol"/>
    <property type="evidence" value="ECO:0000318"/>
    <property type="project" value="GO_Central"/>
</dbReference>
<dbReference type="GO" id="GO:0050660">
    <property type="term" value="F:flavin adenine dinucleotide binding"/>
    <property type="evidence" value="ECO:0000318"/>
    <property type="project" value="GO_Central"/>
</dbReference>
<dbReference type="GO" id="GO:0030488">
    <property type="term" value="P:tRNA methylation"/>
    <property type="evidence" value="ECO:0000318"/>
    <property type="project" value="GO_Central"/>
</dbReference>
<dbReference type="GO" id="GO:0002098">
    <property type="term" value="P:tRNA wobble uridine modification"/>
    <property type="evidence" value="ECO:0000318"/>
    <property type="project" value="GO_Central"/>
</dbReference>
<dbReference type="FunFam" id="1.10.10.1800:FF:000001">
    <property type="entry name" value="tRNA uridine 5-carboxymethylaminomethyl modification enzyme MnmG"/>
    <property type="match status" value="1"/>
</dbReference>
<dbReference type="FunFam" id="1.10.150.570:FF:000001">
    <property type="entry name" value="tRNA uridine 5-carboxymethylaminomethyl modification enzyme MnmG"/>
    <property type="match status" value="1"/>
</dbReference>
<dbReference type="FunFam" id="3.50.50.60:FF:000002">
    <property type="entry name" value="tRNA uridine 5-carboxymethylaminomethyl modification enzyme MnmG"/>
    <property type="match status" value="1"/>
</dbReference>
<dbReference type="FunFam" id="3.50.50.60:FF:000010">
    <property type="entry name" value="tRNA uridine 5-carboxymethylaminomethyl modification enzyme MnmG"/>
    <property type="match status" value="1"/>
</dbReference>
<dbReference type="Gene3D" id="3.50.50.60">
    <property type="entry name" value="FAD/NAD(P)-binding domain"/>
    <property type="match status" value="2"/>
</dbReference>
<dbReference type="Gene3D" id="1.10.150.570">
    <property type="entry name" value="GidA associated domain, C-terminal subdomain"/>
    <property type="match status" value="1"/>
</dbReference>
<dbReference type="Gene3D" id="1.10.10.1800">
    <property type="entry name" value="tRNA uridine 5-carboxymethylaminomethyl modification enzyme MnmG/GidA"/>
    <property type="match status" value="1"/>
</dbReference>
<dbReference type="HAMAP" id="MF_00129">
    <property type="entry name" value="MnmG_GidA"/>
    <property type="match status" value="1"/>
</dbReference>
<dbReference type="InterPro" id="IPR036188">
    <property type="entry name" value="FAD/NAD-bd_sf"/>
</dbReference>
<dbReference type="InterPro" id="IPR049312">
    <property type="entry name" value="GIDA_C_N"/>
</dbReference>
<dbReference type="InterPro" id="IPR004416">
    <property type="entry name" value="MnmG"/>
</dbReference>
<dbReference type="InterPro" id="IPR002218">
    <property type="entry name" value="MnmG-rel"/>
</dbReference>
<dbReference type="InterPro" id="IPR020595">
    <property type="entry name" value="MnmG-rel_CS"/>
</dbReference>
<dbReference type="InterPro" id="IPR026904">
    <property type="entry name" value="MnmG_C"/>
</dbReference>
<dbReference type="InterPro" id="IPR047001">
    <property type="entry name" value="MnmG_C_subdom"/>
</dbReference>
<dbReference type="InterPro" id="IPR044920">
    <property type="entry name" value="MnmG_C_subdom_sf"/>
</dbReference>
<dbReference type="InterPro" id="IPR040131">
    <property type="entry name" value="MnmG_N"/>
</dbReference>
<dbReference type="NCBIfam" id="TIGR00136">
    <property type="entry name" value="mnmG_gidA"/>
    <property type="match status" value="1"/>
</dbReference>
<dbReference type="PANTHER" id="PTHR11806">
    <property type="entry name" value="GLUCOSE INHIBITED DIVISION PROTEIN A"/>
    <property type="match status" value="1"/>
</dbReference>
<dbReference type="PANTHER" id="PTHR11806:SF0">
    <property type="entry name" value="PROTEIN MTO1 HOMOLOG, MITOCHONDRIAL"/>
    <property type="match status" value="1"/>
</dbReference>
<dbReference type="Pfam" id="PF01134">
    <property type="entry name" value="GIDA"/>
    <property type="match status" value="1"/>
</dbReference>
<dbReference type="Pfam" id="PF21680">
    <property type="entry name" value="GIDA_C_1st"/>
    <property type="match status" value="1"/>
</dbReference>
<dbReference type="Pfam" id="PF13932">
    <property type="entry name" value="SAM_GIDA_C"/>
    <property type="match status" value="1"/>
</dbReference>
<dbReference type="PRINTS" id="PR00411">
    <property type="entry name" value="PNDRDTASEI"/>
</dbReference>
<dbReference type="SMART" id="SM01228">
    <property type="entry name" value="GIDA_assoc_3"/>
    <property type="match status" value="1"/>
</dbReference>
<dbReference type="SUPFAM" id="SSF51905">
    <property type="entry name" value="FAD/NAD(P)-binding domain"/>
    <property type="match status" value="1"/>
</dbReference>
<dbReference type="PROSITE" id="PS01280">
    <property type="entry name" value="GIDA_1"/>
    <property type="match status" value="1"/>
</dbReference>
<dbReference type="PROSITE" id="PS01281">
    <property type="entry name" value="GIDA_2"/>
    <property type="match status" value="1"/>
</dbReference>
<protein>
    <recommendedName>
        <fullName evidence="1">tRNA uridine 5-carboxymethylaminomethyl modification enzyme MnmG</fullName>
    </recommendedName>
    <alternativeName>
        <fullName evidence="1">Glucose-inhibited division protein A</fullName>
    </alternativeName>
</protein>
<accession>P94613</accession>
<proteinExistence type="inferred from homology"/>
<name>MNMG_COXBU</name>
<reference key="1">
    <citation type="submission" date="1997-01" db="EMBL/GenBank/DDBJ databases">
        <authorList>
            <person name="Willems H."/>
            <person name="Jaeger C."/>
        </authorList>
    </citation>
    <scope>NUCLEOTIDE SEQUENCE [GENOMIC DNA]</scope>
    <source>
        <strain>Nine Mile phase I</strain>
    </source>
</reference>
<reference key="2">
    <citation type="journal article" date="2003" name="Proc. Natl. Acad. Sci. U.S.A.">
        <title>Complete genome sequence of the Q-fever pathogen, Coxiella burnetii.</title>
        <authorList>
            <person name="Seshadri R."/>
            <person name="Paulsen I.T."/>
            <person name="Eisen J.A."/>
            <person name="Read T.D."/>
            <person name="Nelson K.E."/>
            <person name="Nelson W.C."/>
            <person name="Ward N.L."/>
            <person name="Tettelin H."/>
            <person name="Davidsen T.M."/>
            <person name="Beanan M.J."/>
            <person name="DeBoy R.T."/>
            <person name="Daugherty S.C."/>
            <person name="Brinkac L.M."/>
            <person name="Madupu R."/>
            <person name="Dodson R.J."/>
            <person name="Khouri H.M."/>
            <person name="Lee K.H."/>
            <person name="Carty H.A."/>
            <person name="Scanlan D."/>
            <person name="Heinzen R.A."/>
            <person name="Thompson H.A."/>
            <person name="Samuel J.E."/>
            <person name="Fraser C.M."/>
            <person name="Heidelberg J.F."/>
        </authorList>
    </citation>
    <scope>NUCLEOTIDE SEQUENCE [LARGE SCALE GENOMIC DNA]</scope>
    <source>
        <strain>RSA 493 / Nine Mile phase I</strain>
    </source>
</reference>